<name>HTPG_METPB</name>
<dbReference type="EMBL" id="CP001029">
    <property type="protein sequence ID" value="ACB79137.1"/>
    <property type="molecule type" value="Genomic_DNA"/>
</dbReference>
<dbReference type="RefSeq" id="WP_012452890.1">
    <property type="nucleotide sequence ID" value="NC_010725.1"/>
</dbReference>
<dbReference type="SMR" id="B1Z9Y8"/>
<dbReference type="STRING" id="441620.Mpop_0960"/>
<dbReference type="KEGG" id="mpo:Mpop_0960"/>
<dbReference type="eggNOG" id="COG0326">
    <property type="taxonomic scope" value="Bacteria"/>
</dbReference>
<dbReference type="HOGENOM" id="CLU_006684_3_0_5"/>
<dbReference type="OrthoDB" id="9802640at2"/>
<dbReference type="Proteomes" id="UP000007136">
    <property type="component" value="Chromosome"/>
</dbReference>
<dbReference type="GO" id="GO:0005737">
    <property type="term" value="C:cytoplasm"/>
    <property type="evidence" value="ECO:0007669"/>
    <property type="project" value="UniProtKB-SubCell"/>
</dbReference>
<dbReference type="GO" id="GO:0005524">
    <property type="term" value="F:ATP binding"/>
    <property type="evidence" value="ECO:0007669"/>
    <property type="project" value="UniProtKB-UniRule"/>
</dbReference>
<dbReference type="GO" id="GO:0016887">
    <property type="term" value="F:ATP hydrolysis activity"/>
    <property type="evidence" value="ECO:0007669"/>
    <property type="project" value="InterPro"/>
</dbReference>
<dbReference type="GO" id="GO:0140662">
    <property type="term" value="F:ATP-dependent protein folding chaperone"/>
    <property type="evidence" value="ECO:0007669"/>
    <property type="project" value="InterPro"/>
</dbReference>
<dbReference type="GO" id="GO:0051082">
    <property type="term" value="F:unfolded protein binding"/>
    <property type="evidence" value="ECO:0007669"/>
    <property type="project" value="UniProtKB-UniRule"/>
</dbReference>
<dbReference type="CDD" id="cd16927">
    <property type="entry name" value="HATPase_Hsp90-like"/>
    <property type="match status" value="1"/>
</dbReference>
<dbReference type="FunFam" id="3.30.565.10:FF:000357">
    <property type="entry name" value="Heat shock protein HSP 90-beta"/>
    <property type="match status" value="1"/>
</dbReference>
<dbReference type="Gene3D" id="3.30.230.80">
    <property type="match status" value="1"/>
</dbReference>
<dbReference type="Gene3D" id="3.40.50.11260">
    <property type="match status" value="1"/>
</dbReference>
<dbReference type="Gene3D" id="1.20.120.790">
    <property type="entry name" value="Heat shock protein 90, C-terminal domain"/>
    <property type="match status" value="1"/>
</dbReference>
<dbReference type="Gene3D" id="3.30.565.10">
    <property type="entry name" value="Histidine kinase-like ATPase, C-terminal domain"/>
    <property type="match status" value="1"/>
</dbReference>
<dbReference type="HAMAP" id="MF_00505">
    <property type="entry name" value="HSP90"/>
    <property type="match status" value="1"/>
</dbReference>
<dbReference type="InterPro" id="IPR036890">
    <property type="entry name" value="HATPase_C_sf"/>
</dbReference>
<dbReference type="InterPro" id="IPR019805">
    <property type="entry name" value="Heat_shock_protein_90_CS"/>
</dbReference>
<dbReference type="InterPro" id="IPR037196">
    <property type="entry name" value="HSP90_C"/>
</dbReference>
<dbReference type="InterPro" id="IPR001404">
    <property type="entry name" value="Hsp90_fam"/>
</dbReference>
<dbReference type="InterPro" id="IPR020575">
    <property type="entry name" value="Hsp90_N"/>
</dbReference>
<dbReference type="InterPro" id="IPR020568">
    <property type="entry name" value="Ribosomal_Su5_D2-typ_SF"/>
</dbReference>
<dbReference type="NCBIfam" id="NF003555">
    <property type="entry name" value="PRK05218.1"/>
    <property type="match status" value="1"/>
</dbReference>
<dbReference type="PANTHER" id="PTHR11528">
    <property type="entry name" value="HEAT SHOCK PROTEIN 90 FAMILY MEMBER"/>
    <property type="match status" value="1"/>
</dbReference>
<dbReference type="Pfam" id="PF13589">
    <property type="entry name" value="HATPase_c_3"/>
    <property type="match status" value="1"/>
</dbReference>
<dbReference type="Pfam" id="PF00183">
    <property type="entry name" value="HSP90"/>
    <property type="match status" value="1"/>
</dbReference>
<dbReference type="PIRSF" id="PIRSF002583">
    <property type="entry name" value="Hsp90"/>
    <property type="match status" value="1"/>
</dbReference>
<dbReference type="PRINTS" id="PR00775">
    <property type="entry name" value="HEATSHOCK90"/>
</dbReference>
<dbReference type="SMART" id="SM00387">
    <property type="entry name" value="HATPase_c"/>
    <property type="match status" value="1"/>
</dbReference>
<dbReference type="SUPFAM" id="SSF55874">
    <property type="entry name" value="ATPase domain of HSP90 chaperone/DNA topoisomerase II/histidine kinase"/>
    <property type="match status" value="1"/>
</dbReference>
<dbReference type="SUPFAM" id="SSF110942">
    <property type="entry name" value="HSP90 C-terminal domain"/>
    <property type="match status" value="1"/>
</dbReference>
<dbReference type="SUPFAM" id="SSF54211">
    <property type="entry name" value="Ribosomal protein S5 domain 2-like"/>
    <property type="match status" value="1"/>
</dbReference>
<dbReference type="PROSITE" id="PS00298">
    <property type="entry name" value="HSP90"/>
    <property type="match status" value="1"/>
</dbReference>
<evidence type="ECO:0000255" key="1">
    <source>
        <dbReference type="HAMAP-Rule" id="MF_00505"/>
    </source>
</evidence>
<accession>B1Z9Y8</accession>
<reference key="1">
    <citation type="submission" date="2008-04" db="EMBL/GenBank/DDBJ databases">
        <title>Complete sequence of chromosome of Methylobacterium populi BJ001.</title>
        <authorList>
            <consortium name="US DOE Joint Genome Institute"/>
            <person name="Copeland A."/>
            <person name="Lucas S."/>
            <person name="Lapidus A."/>
            <person name="Glavina del Rio T."/>
            <person name="Dalin E."/>
            <person name="Tice H."/>
            <person name="Bruce D."/>
            <person name="Goodwin L."/>
            <person name="Pitluck S."/>
            <person name="Chertkov O."/>
            <person name="Brettin T."/>
            <person name="Detter J.C."/>
            <person name="Han C."/>
            <person name="Kuske C.R."/>
            <person name="Schmutz J."/>
            <person name="Larimer F."/>
            <person name="Land M."/>
            <person name="Hauser L."/>
            <person name="Kyrpides N."/>
            <person name="Mikhailova N."/>
            <person name="Marx C."/>
            <person name="Richardson P."/>
        </authorList>
    </citation>
    <scope>NUCLEOTIDE SEQUENCE [LARGE SCALE GENOMIC DNA]</scope>
    <source>
        <strain>ATCC BAA-705 / NCIMB 13946 / BJ001</strain>
    </source>
</reference>
<keyword id="KW-0067">ATP-binding</keyword>
<keyword id="KW-0143">Chaperone</keyword>
<keyword id="KW-0963">Cytoplasm</keyword>
<keyword id="KW-0547">Nucleotide-binding</keyword>
<keyword id="KW-0346">Stress response</keyword>
<sequence length="626" mass="69307">MSETVERHEFGAEVGRLLDLVVHALYSDREIFLRELVANAADATDRRRFEALTNEALALPSDARVLIAPDKAARTLTISDSGIGMSKEDLAQNLGTIARSGTRAFSQALGEAKGSEGEDLRPSLIGQFGVGFYSAFMVADRVTVTSRRAGGEEAWTWASDGKGSYTLEPASREQAGTDIVLHLKEDADEYLESYRLDHVVRKWADNIAVPIAIRDAEGKEEAANRGTALWRKPKSEITEEQYKEFYRTVSHGFDEPWATLHWRAEGALEFTGLLFVPSMKPFMPVEDDRRSKVRLHVRRMFITDEAELLPNWLRFVHGVVDTDDLPLNVSREMLQSTPTLQKIRRAVTTRVINELSNRSKNTEKADDYQKFFENFGSVLKEGIYEDFERRAEIAPLLRFRSSTEGGWTSLPDYVSRMKPEQEAIYYLVADDVEALKNSAQLEGFRARGVEVLLLSDHVDAFWPEQLGKFEDKPLRSVTQGSADLAKLKPEGEAAEDAPALDRLVAALKLALEPDVSDVRVTDRLVDSAVVLAASGMGPDLQMQRLLRRAGRGFGGSAPILEINPRHALIRSLNDRAEAGEDLKAEAGTLLDLARVQDGDTPRDPVAFARAVAAALAGTVAKPAESA</sequence>
<organism>
    <name type="scientific">Methylorubrum populi (strain ATCC BAA-705 / NCIMB 13946 / BJ001)</name>
    <name type="common">Methylobacterium populi</name>
    <dbReference type="NCBI Taxonomy" id="441620"/>
    <lineage>
        <taxon>Bacteria</taxon>
        <taxon>Pseudomonadati</taxon>
        <taxon>Pseudomonadota</taxon>
        <taxon>Alphaproteobacteria</taxon>
        <taxon>Hyphomicrobiales</taxon>
        <taxon>Methylobacteriaceae</taxon>
        <taxon>Methylorubrum</taxon>
    </lineage>
</organism>
<comment type="function">
    <text evidence="1">Molecular chaperone. Has ATPase activity.</text>
</comment>
<comment type="subunit">
    <text evidence="1">Homodimer.</text>
</comment>
<comment type="subcellular location">
    <subcellularLocation>
        <location evidence="1">Cytoplasm</location>
    </subcellularLocation>
</comment>
<comment type="similarity">
    <text evidence="1">Belongs to the heat shock protein 90 family.</text>
</comment>
<proteinExistence type="inferred from homology"/>
<protein>
    <recommendedName>
        <fullName evidence="1">Chaperone protein HtpG</fullName>
    </recommendedName>
    <alternativeName>
        <fullName evidence="1">Heat shock protein HtpG</fullName>
    </alternativeName>
    <alternativeName>
        <fullName evidence="1">High temperature protein G</fullName>
    </alternativeName>
</protein>
<gene>
    <name evidence="1" type="primary">htpG</name>
    <name type="ordered locus">Mpop_0960</name>
</gene>
<feature type="chain" id="PRO_1000127030" description="Chaperone protein HtpG">
    <location>
        <begin position="1"/>
        <end position="626"/>
    </location>
</feature>
<feature type="region of interest" description="A; substrate-binding" evidence="1">
    <location>
        <begin position="1"/>
        <end position="331"/>
    </location>
</feature>
<feature type="region of interest" description="B" evidence="1">
    <location>
        <begin position="332"/>
        <end position="544"/>
    </location>
</feature>
<feature type="region of interest" description="C" evidence="1">
    <location>
        <begin position="545"/>
        <end position="626"/>
    </location>
</feature>